<protein>
    <recommendedName>
        <fullName evidence="1">tRNA pseudouridine synthase B</fullName>
        <ecNumber evidence="1">5.4.99.25</ecNumber>
    </recommendedName>
    <alternativeName>
        <fullName evidence="1">tRNA pseudouridine(55) synthase</fullName>
        <shortName evidence="1">Psi55 synthase</shortName>
    </alternativeName>
    <alternativeName>
        <fullName evidence="1">tRNA pseudouridylate synthase</fullName>
    </alternativeName>
    <alternativeName>
        <fullName evidence="1">tRNA-uridine isomerase</fullName>
    </alternativeName>
</protein>
<keyword id="KW-0413">Isomerase</keyword>
<keyword id="KW-1185">Reference proteome</keyword>
<keyword id="KW-0819">tRNA processing</keyword>
<dbReference type="EC" id="5.4.99.25" evidence="1"/>
<dbReference type="EMBL" id="AE017354">
    <property type="protein sequence ID" value="AAU28821.1"/>
    <property type="status" value="ALT_INIT"/>
    <property type="molecule type" value="Genomic_DNA"/>
</dbReference>
<dbReference type="RefSeq" id="WP_015443946.1">
    <property type="nucleotide sequence ID" value="NC_002942.5"/>
</dbReference>
<dbReference type="RefSeq" id="YP_096768.1">
    <property type="nucleotide sequence ID" value="NC_002942.5"/>
</dbReference>
<dbReference type="SMR" id="Q5ZRV6"/>
<dbReference type="STRING" id="272624.lpg2770"/>
<dbReference type="PaxDb" id="272624-lpg2770"/>
<dbReference type="GeneID" id="57036768"/>
<dbReference type="KEGG" id="lpn:lpg2770"/>
<dbReference type="PATRIC" id="fig|272624.6.peg.2952"/>
<dbReference type="eggNOG" id="COG0130">
    <property type="taxonomic scope" value="Bacteria"/>
</dbReference>
<dbReference type="HOGENOM" id="CLU_032087_0_3_6"/>
<dbReference type="OrthoDB" id="9802309at2"/>
<dbReference type="Proteomes" id="UP000000609">
    <property type="component" value="Chromosome"/>
</dbReference>
<dbReference type="GO" id="GO:0003723">
    <property type="term" value="F:RNA binding"/>
    <property type="evidence" value="ECO:0007669"/>
    <property type="project" value="InterPro"/>
</dbReference>
<dbReference type="GO" id="GO:0160148">
    <property type="term" value="F:tRNA pseudouridine(55) synthase activity"/>
    <property type="evidence" value="ECO:0007669"/>
    <property type="project" value="UniProtKB-EC"/>
</dbReference>
<dbReference type="GO" id="GO:1990481">
    <property type="term" value="P:mRNA pseudouridine synthesis"/>
    <property type="evidence" value="ECO:0007669"/>
    <property type="project" value="TreeGrafter"/>
</dbReference>
<dbReference type="GO" id="GO:0031119">
    <property type="term" value="P:tRNA pseudouridine synthesis"/>
    <property type="evidence" value="ECO:0007669"/>
    <property type="project" value="UniProtKB-UniRule"/>
</dbReference>
<dbReference type="CDD" id="cd02573">
    <property type="entry name" value="PseudoU_synth_EcTruB"/>
    <property type="match status" value="1"/>
</dbReference>
<dbReference type="CDD" id="cd21152">
    <property type="entry name" value="PUA_TruB_bacterial"/>
    <property type="match status" value="1"/>
</dbReference>
<dbReference type="Gene3D" id="3.30.2350.10">
    <property type="entry name" value="Pseudouridine synthase"/>
    <property type="match status" value="1"/>
</dbReference>
<dbReference type="Gene3D" id="2.30.130.10">
    <property type="entry name" value="PUA domain"/>
    <property type="match status" value="1"/>
</dbReference>
<dbReference type="HAMAP" id="MF_01080">
    <property type="entry name" value="TruB_bact"/>
    <property type="match status" value="1"/>
</dbReference>
<dbReference type="InterPro" id="IPR020103">
    <property type="entry name" value="PsdUridine_synth_cat_dom_sf"/>
</dbReference>
<dbReference type="InterPro" id="IPR002501">
    <property type="entry name" value="PsdUridine_synth_N"/>
</dbReference>
<dbReference type="InterPro" id="IPR015947">
    <property type="entry name" value="PUA-like_sf"/>
</dbReference>
<dbReference type="InterPro" id="IPR036974">
    <property type="entry name" value="PUA_sf"/>
</dbReference>
<dbReference type="InterPro" id="IPR014780">
    <property type="entry name" value="tRNA_psdUridine_synth_TruB"/>
</dbReference>
<dbReference type="InterPro" id="IPR015240">
    <property type="entry name" value="tRNA_sdUridine_synth_fam1_C"/>
</dbReference>
<dbReference type="InterPro" id="IPR032819">
    <property type="entry name" value="TruB_C"/>
</dbReference>
<dbReference type="NCBIfam" id="TIGR00431">
    <property type="entry name" value="TruB"/>
    <property type="match status" value="1"/>
</dbReference>
<dbReference type="PANTHER" id="PTHR13767:SF2">
    <property type="entry name" value="PSEUDOURIDYLATE SYNTHASE TRUB1"/>
    <property type="match status" value="1"/>
</dbReference>
<dbReference type="PANTHER" id="PTHR13767">
    <property type="entry name" value="TRNA-PSEUDOURIDINE SYNTHASE"/>
    <property type="match status" value="1"/>
</dbReference>
<dbReference type="Pfam" id="PF09157">
    <property type="entry name" value="TruB-C_2"/>
    <property type="match status" value="1"/>
</dbReference>
<dbReference type="Pfam" id="PF16198">
    <property type="entry name" value="TruB_C_2"/>
    <property type="match status" value="1"/>
</dbReference>
<dbReference type="Pfam" id="PF01509">
    <property type="entry name" value="TruB_N"/>
    <property type="match status" value="1"/>
</dbReference>
<dbReference type="SUPFAM" id="SSF55120">
    <property type="entry name" value="Pseudouridine synthase"/>
    <property type="match status" value="1"/>
</dbReference>
<dbReference type="SUPFAM" id="SSF88697">
    <property type="entry name" value="PUA domain-like"/>
    <property type="match status" value="1"/>
</dbReference>
<comment type="function">
    <text evidence="1">Responsible for synthesis of pseudouridine from uracil-55 in the psi GC loop of transfer RNAs.</text>
</comment>
<comment type="catalytic activity">
    <reaction evidence="1">
        <text>uridine(55) in tRNA = pseudouridine(55) in tRNA</text>
        <dbReference type="Rhea" id="RHEA:42532"/>
        <dbReference type="Rhea" id="RHEA-COMP:10101"/>
        <dbReference type="Rhea" id="RHEA-COMP:10102"/>
        <dbReference type="ChEBI" id="CHEBI:65314"/>
        <dbReference type="ChEBI" id="CHEBI:65315"/>
        <dbReference type="EC" id="5.4.99.25"/>
    </reaction>
</comment>
<comment type="similarity">
    <text evidence="1">Belongs to the pseudouridine synthase TruB family. Type 1 subfamily.</text>
</comment>
<comment type="sequence caution" evidence="2">
    <conflict type="erroneous initiation">
        <sequence resource="EMBL-CDS" id="AAU28821"/>
    </conflict>
</comment>
<feature type="chain" id="PRO_0000121852" description="tRNA pseudouridine synthase B">
    <location>
        <begin position="1"/>
        <end position="303"/>
    </location>
</feature>
<feature type="active site" description="Nucleophile" evidence="1">
    <location>
        <position position="47"/>
    </location>
</feature>
<organism>
    <name type="scientific">Legionella pneumophila subsp. pneumophila (strain Philadelphia 1 / ATCC 33152 / DSM 7513)</name>
    <dbReference type="NCBI Taxonomy" id="272624"/>
    <lineage>
        <taxon>Bacteria</taxon>
        <taxon>Pseudomonadati</taxon>
        <taxon>Pseudomonadota</taxon>
        <taxon>Gammaproteobacteria</taxon>
        <taxon>Legionellales</taxon>
        <taxon>Legionellaceae</taxon>
        <taxon>Legionella</taxon>
    </lineage>
</organism>
<accession>Q5ZRV6</accession>
<name>TRUB_LEGPH</name>
<reference key="1">
    <citation type="journal article" date="2004" name="Science">
        <title>The genomic sequence of the accidental pathogen Legionella pneumophila.</title>
        <authorList>
            <person name="Chien M."/>
            <person name="Morozova I."/>
            <person name="Shi S."/>
            <person name="Sheng H."/>
            <person name="Chen J."/>
            <person name="Gomez S.M."/>
            <person name="Asamani G."/>
            <person name="Hill K."/>
            <person name="Nuara J."/>
            <person name="Feder M."/>
            <person name="Rineer J."/>
            <person name="Greenberg J.J."/>
            <person name="Steshenko V."/>
            <person name="Park S.H."/>
            <person name="Zhao B."/>
            <person name="Teplitskaya E."/>
            <person name="Edwards J.R."/>
            <person name="Pampou S."/>
            <person name="Georghiou A."/>
            <person name="Chou I.-C."/>
            <person name="Iannuccilli W."/>
            <person name="Ulz M.E."/>
            <person name="Kim D.H."/>
            <person name="Geringer-Sameth A."/>
            <person name="Goldsberry C."/>
            <person name="Morozov P."/>
            <person name="Fischer S.G."/>
            <person name="Segal G."/>
            <person name="Qu X."/>
            <person name="Rzhetsky A."/>
            <person name="Zhang P."/>
            <person name="Cayanis E."/>
            <person name="De Jong P.J."/>
            <person name="Ju J."/>
            <person name="Kalachikov S."/>
            <person name="Shuman H.A."/>
            <person name="Russo J.J."/>
        </authorList>
    </citation>
    <scope>NUCLEOTIDE SEQUENCE [LARGE SCALE GENOMIC DNA]</scope>
    <source>
        <strain>Philadelphia 1 / ATCC 33152 / DSM 7513</strain>
    </source>
</reference>
<proteinExistence type="inferred from homology"/>
<sequence length="303" mass="33401">MTTIESQCSIDGILLLNKPQGMTSNAALQKTKHLFGAKKAGHTGSLDPLATGMLPLCFGEATKICQYLLNADKSYETIGRLGIKTNTADCTGEVIFCIENYTVSHEEMIATLEKYKGKIKQIPSMFSALKHKGTPLYRLAREGIEIERKARDIVISQLNLEQFDGECFTLTVSCSKGTYIRNLVEDIGDTLKAGAHMTKLHRLYTAGFENNRMYTLDELQDMPLSQRLACLIPIDQAVQHLTPVILSDSEVTAIRQGKVISNKTGAVEGEDLRLYGEQSQFIGIGQALIHGDIKAKRLVSFAL</sequence>
<evidence type="ECO:0000255" key="1">
    <source>
        <dbReference type="HAMAP-Rule" id="MF_01080"/>
    </source>
</evidence>
<evidence type="ECO:0000305" key="2"/>
<gene>
    <name evidence="1" type="primary">truB</name>
    <name type="ordered locus">lpg2770</name>
</gene>